<accession>Q9CMJ4</accession>
<proteinExistence type="inferred from homology"/>
<dbReference type="EMBL" id="AE004439">
    <property type="protein sequence ID" value="AAK02914.1"/>
    <property type="molecule type" value="Genomic_DNA"/>
</dbReference>
<dbReference type="SMR" id="Q9CMJ4"/>
<dbReference type="STRING" id="272843.PM0830"/>
<dbReference type="EnsemblBacteria" id="AAK02914">
    <property type="protein sequence ID" value="AAK02914"/>
    <property type="gene ID" value="PM0830"/>
</dbReference>
<dbReference type="KEGG" id="pmu:PM0830"/>
<dbReference type="HOGENOM" id="CLU_133645_0_0_6"/>
<dbReference type="Proteomes" id="UP000000809">
    <property type="component" value="Chromosome"/>
</dbReference>
<dbReference type="GO" id="GO:0005886">
    <property type="term" value="C:plasma membrane"/>
    <property type="evidence" value="ECO:0007669"/>
    <property type="project" value="UniProtKB-SubCell"/>
</dbReference>
<dbReference type="HAMAP" id="MF_01071">
    <property type="entry name" value="UPF0266"/>
    <property type="match status" value="1"/>
</dbReference>
<dbReference type="InterPro" id="IPR009328">
    <property type="entry name" value="DUF986"/>
</dbReference>
<dbReference type="NCBIfam" id="NF002791">
    <property type="entry name" value="PRK02913.1"/>
    <property type="match status" value="1"/>
</dbReference>
<dbReference type="Pfam" id="PF06173">
    <property type="entry name" value="DUF986"/>
    <property type="match status" value="1"/>
</dbReference>
<dbReference type="PIRSF" id="PIRSF020687">
    <property type="entry name" value="UCP020687"/>
    <property type="match status" value="1"/>
</dbReference>
<comment type="subcellular location">
    <subcellularLocation>
        <location evidence="1">Cell inner membrane</location>
        <topology evidence="1">Multi-pass membrane protein</topology>
    </subcellularLocation>
</comment>
<comment type="similarity">
    <text evidence="1">Belongs to the UPF0266 family.</text>
</comment>
<keyword id="KW-0997">Cell inner membrane</keyword>
<keyword id="KW-1003">Cell membrane</keyword>
<keyword id="KW-0472">Membrane</keyword>
<keyword id="KW-1185">Reference proteome</keyword>
<keyword id="KW-0812">Transmembrane</keyword>
<keyword id="KW-1133">Transmembrane helix</keyword>
<feature type="chain" id="PRO_0000218118" description="UPF0266 membrane protein PM0830">
    <location>
        <begin position="1"/>
        <end position="152"/>
    </location>
</feature>
<feature type="transmembrane region" description="Helical" evidence="1">
    <location>
        <begin position="1"/>
        <end position="21"/>
    </location>
</feature>
<feature type="transmembrane region" description="Helical" evidence="1">
    <location>
        <begin position="45"/>
        <end position="65"/>
    </location>
</feature>
<feature type="transmembrane region" description="Helical" evidence="1">
    <location>
        <begin position="66"/>
        <end position="86"/>
    </location>
</feature>
<protein>
    <recommendedName>
        <fullName evidence="1">UPF0266 membrane protein PM0830</fullName>
    </recommendedName>
</protein>
<evidence type="ECO:0000255" key="1">
    <source>
        <dbReference type="HAMAP-Rule" id="MF_01071"/>
    </source>
</evidence>
<reference key="1">
    <citation type="journal article" date="2001" name="Proc. Natl. Acad. Sci. U.S.A.">
        <title>Complete genomic sequence of Pasteurella multocida Pm70.</title>
        <authorList>
            <person name="May B.J."/>
            <person name="Zhang Q."/>
            <person name="Li L.L."/>
            <person name="Paustian M.L."/>
            <person name="Whittam T.S."/>
            <person name="Kapur V."/>
        </authorList>
    </citation>
    <scope>NUCLEOTIDE SEQUENCE [LARGE SCALE GENOMIC DNA]</scope>
    <source>
        <strain>Pm70</strain>
    </source>
</reference>
<gene>
    <name type="ordered locus">PM0830</name>
</gene>
<organism>
    <name type="scientific">Pasteurella multocida (strain Pm70)</name>
    <dbReference type="NCBI Taxonomy" id="272843"/>
    <lineage>
        <taxon>Bacteria</taxon>
        <taxon>Pseudomonadati</taxon>
        <taxon>Pseudomonadota</taxon>
        <taxon>Gammaproteobacteria</taxon>
        <taxon>Pasteurellales</taxon>
        <taxon>Pasteurellaceae</taxon>
        <taxon>Pasteurella</taxon>
    </lineage>
</organism>
<name>Y830_PASMU</name>
<sequence>MMIINVLLCLGIFCFLLYAFYDQFFMDCWKGKTLLKVHLKKQGQKDALIFSLLIGIIIYQTYTNLSSATLYLLTALILLSVYAAFIRAPMLLLKEKGFFFGNIYFQYADIHQVNLAENNILVIDMKNGKRLLVHLLTDQDREQVIQFFGGYK</sequence>